<organism>
    <name type="scientific">Streptococcus pyogenes serotype M1</name>
    <dbReference type="NCBI Taxonomy" id="301447"/>
    <lineage>
        <taxon>Bacteria</taxon>
        <taxon>Bacillati</taxon>
        <taxon>Bacillota</taxon>
        <taxon>Bacilli</taxon>
        <taxon>Lactobacillales</taxon>
        <taxon>Streptococcaceae</taxon>
        <taxon>Streptococcus</taxon>
    </lineage>
</organism>
<evidence type="ECO:0000255" key="1">
    <source>
        <dbReference type="HAMAP-Rule" id="MF_01310"/>
    </source>
</evidence>
<evidence type="ECO:0000305" key="2"/>
<comment type="function">
    <text evidence="1">Located on the platform of the 30S subunit, it bridges several disparate RNA helices of the 16S rRNA. Forms part of the Shine-Dalgarno cleft in the 70S ribosome.</text>
</comment>
<comment type="subunit">
    <text evidence="1">Part of the 30S ribosomal subunit. Interacts with proteins S7 and S18. Binds to IF-3.</text>
</comment>
<comment type="similarity">
    <text evidence="1">Belongs to the universal ribosomal protein uS11 family.</text>
</comment>
<gene>
    <name evidence="1" type="primary">rpsK</name>
    <name type="ordered locus">SPy_0078</name>
    <name type="ordered locus">M5005_Spy0069</name>
</gene>
<feature type="chain" id="PRO_0000123235" description="Small ribosomal subunit protein uS11">
    <location>
        <begin position="1"/>
        <end position="127"/>
    </location>
</feature>
<dbReference type="EMBL" id="AE004092">
    <property type="protein sequence ID" value="AAK33207.1"/>
    <property type="molecule type" value="Genomic_DNA"/>
</dbReference>
<dbReference type="EMBL" id="CP000017">
    <property type="protein sequence ID" value="AAZ50688.1"/>
    <property type="molecule type" value="Genomic_DNA"/>
</dbReference>
<dbReference type="RefSeq" id="NP_268485.1">
    <property type="nucleotide sequence ID" value="NC_002737.2"/>
</dbReference>
<dbReference type="SMR" id="Q9A1V0"/>
<dbReference type="PaxDb" id="1314-HKU360_00102"/>
<dbReference type="KEGG" id="spy:SPy_0078"/>
<dbReference type="KEGG" id="spz:M5005_Spy0069"/>
<dbReference type="PATRIC" id="fig|160490.10.peg.69"/>
<dbReference type="HOGENOM" id="CLU_072439_5_0_9"/>
<dbReference type="OMA" id="KWGVAHI"/>
<dbReference type="PRO" id="PR:Q9A1V0"/>
<dbReference type="Proteomes" id="UP000000750">
    <property type="component" value="Chromosome"/>
</dbReference>
<dbReference type="GO" id="GO:1990904">
    <property type="term" value="C:ribonucleoprotein complex"/>
    <property type="evidence" value="ECO:0007669"/>
    <property type="project" value="UniProtKB-KW"/>
</dbReference>
<dbReference type="GO" id="GO:0005840">
    <property type="term" value="C:ribosome"/>
    <property type="evidence" value="ECO:0007669"/>
    <property type="project" value="UniProtKB-KW"/>
</dbReference>
<dbReference type="GO" id="GO:0019843">
    <property type="term" value="F:rRNA binding"/>
    <property type="evidence" value="ECO:0007669"/>
    <property type="project" value="UniProtKB-UniRule"/>
</dbReference>
<dbReference type="GO" id="GO:0003735">
    <property type="term" value="F:structural constituent of ribosome"/>
    <property type="evidence" value="ECO:0007669"/>
    <property type="project" value="InterPro"/>
</dbReference>
<dbReference type="GO" id="GO:0006412">
    <property type="term" value="P:translation"/>
    <property type="evidence" value="ECO:0007669"/>
    <property type="project" value="UniProtKB-UniRule"/>
</dbReference>
<dbReference type="FunFam" id="3.30.420.80:FF:000001">
    <property type="entry name" value="30S ribosomal protein S11"/>
    <property type="match status" value="1"/>
</dbReference>
<dbReference type="Gene3D" id="3.30.420.80">
    <property type="entry name" value="Ribosomal protein S11"/>
    <property type="match status" value="1"/>
</dbReference>
<dbReference type="HAMAP" id="MF_01310">
    <property type="entry name" value="Ribosomal_uS11"/>
    <property type="match status" value="1"/>
</dbReference>
<dbReference type="InterPro" id="IPR001971">
    <property type="entry name" value="Ribosomal_uS11"/>
</dbReference>
<dbReference type="InterPro" id="IPR019981">
    <property type="entry name" value="Ribosomal_uS11_bac-type"/>
</dbReference>
<dbReference type="InterPro" id="IPR018102">
    <property type="entry name" value="Ribosomal_uS11_CS"/>
</dbReference>
<dbReference type="InterPro" id="IPR036967">
    <property type="entry name" value="Ribosomal_uS11_sf"/>
</dbReference>
<dbReference type="NCBIfam" id="NF003698">
    <property type="entry name" value="PRK05309.1"/>
    <property type="match status" value="1"/>
</dbReference>
<dbReference type="NCBIfam" id="TIGR03632">
    <property type="entry name" value="uS11_bact"/>
    <property type="match status" value="1"/>
</dbReference>
<dbReference type="PANTHER" id="PTHR11759">
    <property type="entry name" value="40S RIBOSOMAL PROTEIN S14/30S RIBOSOMAL PROTEIN S11"/>
    <property type="match status" value="1"/>
</dbReference>
<dbReference type="Pfam" id="PF00411">
    <property type="entry name" value="Ribosomal_S11"/>
    <property type="match status" value="1"/>
</dbReference>
<dbReference type="PIRSF" id="PIRSF002131">
    <property type="entry name" value="Ribosomal_S11"/>
    <property type="match status" value="1"/>
</dbReference>
<dbReference type="SUPFAM" id="SSF53137">
    <property type="entry name" value="Translational machinery components"/>
    <property type="match status" value="1"/>
</dbReference>
<dbReference type="PROSITE" id="PS00054">
    <property type="entry name" value="RIBOSOMAL_S11"/>
    <property type="match status" value="1"/>
</dbReference>
<reference key="1">
    <citation type="journal article" date="2001" name="Proc. Natl. Acad. Sci. U.S.A.">
        <title>Complete genome sequence of an M1 strain of Streptococcus pyogenes.</title>
        <authorList>
            <person name="Ferretti J.J."/>
            <person name="McShan W.M."/>
            <person name="Ajdic D.J."/>
            <person name="Savic D.J."/>
            <person name="Savic G."/>
            <person name="Lyon K."/>
            <person name="Primeaux C."/>
            <person name="Sezate S."/>
            <person name="Suvorov A.N."/>
            <person name="Kenton S."/>
            <person name="Lai H.S."/>
            <person name="Lin S.P."/>
            <person name="Qian Y."/>
            <person name="Jia H.G."/>
            <person name="Najar F.Z."/>
            <person name="Ren Q."/>
            <person name="Zhu H."/>
            <person name="Song L."/>
            <person name="White J."/>
            <person name="Yuan X."/>
            <person name="Clifton S.W."/>
            <person name="Roe B.A."/>
            <person name="McLaughlin R.E."/>
        </authorList>
    </citation>
    <scope>NUCLEOTIDE SEQUENCE [LARGE SCALE GENOMIC DNA]</scope>
    <source>
        <strain>ATCC 700294 / SF370 / Serotype M1</strain>
    </source>
</reference>
<reference key="2">
    <citation type="journal article" date="2005" name="J. Infect. Dis.">
        <title>Evolutionary origin and emergence of a highly successful clone of serotype M1 group A Streptococcus involved multiple horizontal gene transfer events.</title>
        <authorList>
            <person name="Sumby P."/>
            <person name="Porcella S.F."/>
            <person name="Madrigal A.G."/>
            <person name="Barbian K.D."/>
            <person name="Virtaneva K."/>
            <person name="Ricklefs S.M."/>
            <person name="Sturdevant D.E."/>
            <person name="Graham M.R."/>
            <person name="Vuopio-Varkila J."/>
            <person name="Hoe N.P."/>
            <person name="Musser J.M."/>
        </authorList>
    </citation>
    <scope>NUCLEOTIDE SEQUENCE [LARGE SCALE GENOMIC DNA]</scope>
    <source>
        <strain>ATCC BAA-947 / MGAS5005 / Serotype M1</strain>
    </source>
</reference>
<proteinExistence type="inferred from homology"/>
<protein>
    <recommendedName>
        <fullName evidence="1">Small ribosomal subunit protein uS11</fullName>
    </recommendedName>
    <alternativeName>
        <fullName evidence="2">30S ribosomal protein S11</fullName>
    </alternativeName>
</protein>
<sequence>MAKPTRKRRVKKDIESGVAHIHATFNNTIVMITDVHGNALAWSSAGALGFKGSRKSTPFAAQMAAEAAAKSAQEHGLKTVEVTVKGPGSGRESAIRALAAAGLEVTAIRDVTPVPHNGARPPKRRRV</sequence>
<name>RS11_STRP1</name>
<accession>Q9A1V0</accession>
<accession>Q491N0</accession>
<keyword id="KW-1185">Reference proteome</keyword>
<keyword id="KW-0687">Ribonucleoprotein</keyword>
<keyword id="KW-0689">Ribosomal protein</keyword>
<keyword id="KW-0694">RNA-binding</keyword>
<keyword id="KW-0699">rRNA-binding</keyword>